<evidence type="ECO:0000255" key="1">
    <source>
        <dbReference type="HAMAP-Rule" id="MF_01425"/>
    </source>
</evidence>
<evidence type="ECO:0000305" key="2"/>
<accession>Q8RR17</accession>
<protein>
    <recommendedName>
        <fullName evidence="1">Cation-efflux pump FieF</fullName>
    </recommendedName>
</protein>
<organism>
    <name type="scientific">Klebsiella pneumoniae</name>
    <dbReference type="NCBI Taxonomy" id="573"/>
    <lineage>
        <taxon>Bacteria</taxon>
        <taxon>Pseudomonadati</taxon>
        <taxon>Pseudomonadota</taxon>
        <taxon>Gammaproteobacteria</taxon>
        <taxon>Enterobacterales</taxon>
        <taxon>Enterobacteriaceae</taxon>
        <taxon>Klebsiella/Raoultella group</taxon>
        <taxon>Klebsiella</taxon>
        <taxon>Klebsiella pneumoniae complex</taxon>
    </lineage>
</organism>
<keyword id="KW-0997">Cell inner membrane</keyword>
<keyword id="KW-1003">Cell membrane</keyword>
<keyword id="KW-0406">Ion transport</keyword>
<keyword id="KW-0408">Iron</keyword>
<keyword id="KW-0410">Iron transport</keyword>
<keyword id="KW-0472">Membrane</keyword>
<keyword id="KW-0479">Metal-binding</keyword>
<keyword id="KW-0812">Transmembrane</keyword>
<keyword id="KW-1133">Transmembrane helix</keyword>
<keyword id="KW-0813">Transport</keyword>
<keyword id="KW-0862">Zinc</keyword>
<keyword id="KW-0864">Zinc transport</keyword>
<sequence length="300" mass="32886">MNQSYGRLVSRAAIAATAMASALLLIKIFAWWYTGSVSILAALVDSLVDIAASLTNLLVVRYSLQPADEEHTFGHGKAESLAALAQSMFISGSALFLFLTGIQHLVRPEPLQAAGVGVVVTLIALVSTLALVTFQRWVVRKTQSQAVRADMLHYQSDVMMNGAILVALGLSWYGWHRADALFALGIGIYILYSALRMGYEAVQSLLDRALPDEERQDIITIVTAWPGIRGAHDLRTRQSGPTRFIQIHLEMEDNLPLVQAHVIADQVEQAILRRFPGSDVIIHQDPSSVVPAAQQGFFER</sequence>
<dbReference type="EMBL" id="AB073019">
    <property type="protein sequence ID" value="BAB89353.1"/>
    <property type="molecule type" value="Genomic_DNA"/>
</dbReference>
<dbReference type="RefSeq" id="WP_002882907.1">
    <property type="nucleotide sequence ID" value="NZ_WYAM01000027.1"/>
</dbReference>
<dbReference type="SMR" id="Q8RR17"/>
<dbReference type="GeneID" id="69757896"/>
<dbReference type="OMA" id="VHIRMEN"/>
<dbReference type="GO" id="GO:0005886">
    <property type="term" value="C:plasma membrane"/>
    <property type="evidence" value="ECO:0007669"/>
    <property type="project" value="UniProtKB-SubCell"/>
</dbReference>
<dbReference type="GO" id="GO:0015086">
    <property type="term" value="F:cadmium ion transmembrane transporter activity"/>
    <property type="evidence" value="ECO:0007669"/>
    <property type="project" value="UniProtKB-UniRule"/>
</dbReference>
<dbReference type="GO" id="GO:0015093">
    <property type="term" value="F:ferrous iron transmembrane transporter activity"/>
    <property type="evidence" value="ECO:0007669"/>
    <property type="project" value="TreeGrafter"/>
</dbReference>
<dbReference type="GO" id="GO:0046872">
    <property type="term" value="F:metal ion binding"/>
    <property type="evidence" value="ECO:0007669"/>
    <property type="project" value="UniProtKB-KW"/>
</dbReference>
<dbReference type="GO" id="GO:0015341">
    <property type="term" value="F:zinc efflux antiporter activity"/>
    <property type="evidence" value="ECO:0007669"/>
    <property type="project" value="TreeGrafter"/>
</dbReference>
<dbReference type="GO" id="GO:0006882">
    <property type="term" value="P:intracellular zinc ion homeostasis"/>
    <property type="evidence" value="ECO:0007669"/>
    <property type="project" value="TreeGrafter"/>
</dbReference>
<dbReference type="FunFam" id="1.20.1510.10:FF:000001">
    <property type="entry name" value="Ferrous-iron efflux pump FieF"/>
    <property type="match status" value="1"/>
</dbReference>
<dbReference type="FunFam" id="3.30.70.1350:FF:000002">
    <property type="entry name" value="Ferrous-iron efflux pump FieF"/>
    <property type="match status" value="1"/>
</dbReference>
<dbReference type="Gene3D" id="1.20.1510.10">
    <property type="entry name" value="Cation efflux protein transmembrane domain"/>
    <property type="match status" value="1"/>
</dbReference>
<dbReference type="Gene3D" id="3.30.70.1350">
    <property type="entry name" value="Cation efflux protein, cytoplasmic domain"/>
    <property type="match status" value="1"/>
</dbReference>
<dbReference type="HAMAP" id="MF_01425">
    <property type="entry name" value="Cation_efflux_FieF"/>
    <property type="match status" value="1"/>
</dbReference>
<dbReference type="InterPro" id="IPR002524">
    <property type="entry name" value="Cation_efflux"/>
</dbReference>
<dbReference type="InterPro" id="IPR027470">
    <property type="entry name" value="Cation_efflux_CTD"/>
</dbReference>
<dbReference type="InterPro" id="IPR036837">
    <property type="entry name" value="Cation_efflux_CTD_sf"/>
</dbReference>
<dbReference type="InterPro" id="IPR023783">
    <property type="entry name" value="Cation_efflux_FieF"/>
</dbReference>
<dbReference type="InterPro" id="IPR027469">
    <property type="entry name" value="Cation_efflux_TMD_sf"/>
</dbReference>
<dbReference type="InterPro" id="IPR050291">
    <property type="entry name" value="CDF_Transporter"/>
</dbReference>
<dbReference type="NCBIfam" id="TIGR01297">
    <property type="entry name" value="CDF"/>
    <property type="match status" value="1"/>
</dbReference>
<dbReference type="NCBIfam" id="NF007064">
    <property type="entry name" value="PRK09509.1"/>
    <property type="match status" value="1"/>
</dbReference>
<dbReference type="PANTHER" id="PTHR43840:SF41">
    <property type="entry name" value="CATION-EFFLUX PUMP FIEF"/>
    <property type="match status" value="1"/>
</dbReference>
<dbReference type="PANTHER" id="PTHR43840">
    <property type="entry name" value="MITOCHONDRIAL METAL TRANSPORTER 1-RELATED"/>
    <property type="match status" value="1"/>
</dbReference>
<dbReference type="Pfam" id="PF01545">
    <property type="entry name" value="Cation_efflux"/>
    <property type="match status" value="1"/>
</dbReference>
<dbReference type="Pfam" id="PF16916">
    <property type="entry name" value="ZT_dimer"/>
    <property type="match status" value="1"/>
</dbReference>
<dbReference type="SUPFAM" id="SSF160240">
    <property type="entry name" value="Cation efflux protein cytoplasmic domain-like"/>
    <property type="match status" value="1"/>
</dbReference>
<dbReference type="SUPFAM" id="SSF161111">
    <property type="entry name" value="Cation efflux protein transmembrane domain-like"/>
    <property type="match status" value="1"/>
</dbReference>
<gene>
    <name evidence="1" type="primary">fieF</name>
    <name type="synonym">cepA</name>
</gene>
<proteinExistence type="inferred from homology"/>
<name>FIEF_KLEPN</name>
<feature type="chain" id="PRO_0000206128" description="Cation-efflux pump FieF">
    <location>
        <begin position="1"/>
        <end position="300"/>
    </location>
</feature>
<feature type="transmembrane region" description="Helical" evidence="1">
    <location>
        <begin position="24"/>
        <end position="44"/>
    </location>
</feature>
<feature type="transmembrane region" description="Helical" evidence="1">
    <location>
        <begin position="82"/>
        <end position="102"/>
    </location>
</feature>
<feature type="transmembrane region" description="Helical" evidence="1">
    <location>
        <begin position="114"/>
        <end position="134"/>
    </location>
</feature>
<feature type="transmembrane region" description="Helical" evidence="1">
    <location>
        <begin position="156"/>
        <end position="176"/>
    </location>
</feature>
<feature type="transmembrane region" description="Helical" evidence="1">
    <location>
        <begin position="178"/>
        <end position="198"/>
    </location>
</feature>
<feature type="binding site" evidence="1">
    <location>
        <position position="45"/>
    </location>
    <ligand>
        <name>Zn(2+)</name>
        <dbReference type="ChEBI" id="CHEBI:29105"/>
    </ligand>
</feature>
<feature type="binding site" evidence="1">
    <location>
        <position position="49"/>
    </location>
    <ligand>
        <name>Zn(2+)</name>
        <dbReference type="ChEBI" id="CHEBI:29105"/>
    </ligand>
</feature>
<feature type="binding site" evidence="1">
    <location>
        <position position="153"/>
    </location>
    <ligand>
        <name>Zn(2+)</name>
        <dbReference type="ChEBI" id="CHEBI:29105"/>
    </ligand>
</feature>
<feature type="binding site" evidence="1">
    <location>
        <position position="157"/>
    </location>
    <ligand>
        <name>Zn(2+)</name>
        <dbReference type="ChEBI" id="CHEBI:29105"/>
    </ligand>
</feature>
<reference key="1">
    <citation type="journal article" date="2002" name="Antimicrob. Agents Chemother.">
        <title>Cloning of a cation efflux pump gene associated with chlorhexidine resistance in Klebsiella pneumoniae.</title>
        <authorList>
            <person name="Fang C.-T."/>
            <person name="Chen H.-C."/>
            <person name="Chuang Y.-P."/>
            <person name="Chang S.-C."/>
            <person name="Wang J.-T."/>
        </authorList>
    </citation>
    <scope>NUCLEOTIDE SEQUENCE [GENOMIC DNA]</scope>
    <scope>CHLORHEXIDINE RESISTANCE</scope>
</reference>
<comment type="function">
    <text evidence="1">Divalent metal cation transporter which exports Zn(2+), Cd(2+) and possibly Fe(2+). May be involved in zinc and iron detoxification by efflux.</text>
</comment>
<comment type="catalytic activity">
    <reaction evidence="1">
        <text>Zn(2+)(in) + H(+)(out) = Zn(2+)(out) + H(+)(in)</text>
        <dbReference type="Rhea" id="RHEA:28839"/>
        <dbReference type="ChEBI" id="CHEBI:15378"/>
        <dbReference type="ChEBI" id="CHEBI:29105"/>
    </reaction>
</comment>
<comment type="catalytic activity">
    <reaction evidence="1">
        <text>Cd(2+)(in) + H(+)(out) = Cd(2+)(out) + H(+)(in)</text>
        <dbReference type="Rhea" id="RHEA:28739"/>
        <dbReference type="ChEBI" id="CHEBI:15378"/>
        <dbReference type="ChEBI" id="CHEBI:48775"/>
    </reaction>
</comment>
<comment type="catalytic activity">
    <reaction evidence="1">
        <text>Fe(2+)(in) + H(+)(out) = Fe(2+)(out) + H(+)(in)</text>
        <dbReference type="Rhea" id="RHEA:29439"/>
        <dbReference type="ChEBI" id="CHEBI:15378"/>
        <dbReference type="ChEBI" id="CHEBI:29033"/>
    </reaction>
</comment>
<comment type="subunit">
    <text evidence="1">Homodimer.</text>
</comment>
<comment type="subcellular location">
    <subcellularLocation>
        <location evidence="1">Cell inner membrane</location>
        <topology evidence="1">Multi-pass membrane protein</topology>
    </subcellularLocation>
</comment>
<comment type="similarity">
    <text evidence="1 2">Belongs to the cation diffusion facilitator (CDF) transporter (TC 2.A.4) family. FieF subfamily.</text>
</comment>